<reference key="1">
    <citation type="journal article" date="2009" name="PLoS Biol.">
        <title>Lineage-specific biology revealed by a finished genome assembly of the mouse.</title>
        <authorList>
            <person name="Church D.M."/>
            <person name="Goodstadt L."/>
            <person name="Hillier L.W."/>
            <person name="Zody M.C."/>
            <person name="Goldstein S."/>
            <person name="She X."/>
            <person name="Bult C.J."/>
            <person name="Agarwala R."/>
            <person name="Cherry J.L."/>
            <person name="DiCuccio M."/>
            <person name="Hlavina W."/>
            <person name="Kapustin Y."/>
            <person name="Meric P."/>
            <person name="Maglott D."/>
            <person name="Birtle Z."/>
            <person name="Marques A.C."/>
            <person name="Graves T."/>
            <person name="Zhou S."/>
            <person name="Teague B."/>
            <person name="Potamousis K."/>
            <person name="Churas C."/>
            <person name="Place M."/>
            <person name="Herschleb J."/>
            <person name="Runnheim R."/>
            <person name="Forrest D."/>
            <person name="Amos-Landgraf J."/>
            <person name="Schwartz D.C."/>
            <person name="Cheng Z."/>
            <person name="Lindblad-Toh K."/>
            <person name="Eichler E.E."/>
            <person name="Ponting C.P."/>
        </authorList>
    </citation>
    <scope>NUCLEOTIDE SEQUENCE [LARGE SCALE GENOMIC DNA]</scope>
    <source>
        <strain>C57BL/6J</strain>
    </source>
</reference>
<reference key="2">
    <citation type="journal article" date="2002" name="Proc. Natl. Acad. Sci. U.S.A.">
        <title>Reversible cardiac fibrosis and heart failure induced by conditional expression of an antisense mRNA of the mineralocorticoid receptor in cardiomyocytes.</title>
        <authorList>
            <person name="Beggah A.T."/>
            <person name="Escoubet B."/>
            <person name="Puttini S."/>
            <person name="Cailmail S."/>
            <person name="Delage V."/>
            <person name="Ouvrard-Pascaud A."/>
            <person name="Bocchi B."/>
            <person name="Peuchmaur M."/>
            <person name="Delcayre C."/>
            <person name="Farman N."/>
            <person name="Jaisser F."/>
        </authorList>
    </citation>
    <scope>NUCLEOTIDE SEQUENCE [MRNA] OF 5-109 AND 182-288</scope>
    <source>
        <strain>C57BL/6 X DBA/2</strain>
        <tissue>Heart</tissue>
    </source>
</reference>
<reference key="3">
    <citation type="journal article" date="2007" name="Proc. Natl. Acad. Sci. U.S.A.">
        <title>Large-scale phosphorylation analysis of mouse liver.</title>
        <authorList>
            <person name="Villen J."/>
            <person name="Beausoleil S.A."/>
            <person name="Gerber S.A."/>
            <person name="Gygi S.P."/>
        </authorList>
    </citation>
    <scope>PHOSPHORYLATION [LARGE SCALE ANALYSIS] AT SER-299</scope>
    <scope>IDENTIFICATION BY MASS SPECTROMETRY [LARGE SCALE ANALYSIS]</scope>
    <source>
        <tissue>Liver</tissue>
    </source>
</reference>
<reference key="4">
    <citation type="journal article" date="2008" name="Nat. Med.">
        <title>Modification of mineralocorticoid receptor function by Rac1 GTPase: implication in proteinuric kidney disease.</title>
        <authorList>
            <person name="Shibata S."/>
            <person name="Nagase M."/>
            <person name="Yoshida S."/>
            <person name="Kawarazaki W."/>
            <person name="Kurihara H."/>
            <person name="Tanaka H."/>
            <person name="Miyoshi J."/>
            <person name="Takai Y."/>
            <person name="Fujita T."/>
        </authorList>
    </citation>
    <scope>FUNCTION</scope>
    <scope>TISSUE SPECIFICITY</scope>
    <scope>SUBCELLULAR LOCATION</scope>
</reference>
<reference key="5">
    <citation type="journal article" date="2010" name="Cell">
        <title>A tissue-specific atlas of mouse protein phosphorylation and expression.</title>
        <authorList>
            <person name="Huttlin E.L."/>
            <person name="Jedrychowski M.P."/>
            <person name="Elias J.E."/>
            <person name="Goswami T."/>
            <person name="Rad R."/>
            <person name="Beausoleil S.A."/>
            <person name="Villen J."/>
            <person name="Haas W."/>
            <person name="Sowa M.E."/>
            <person name="Gygi S.P."/>
        </authorList>
    </citation>
    <scope>PHOSPHORYLATION [LARGE SCALE ANALYSIS] AT SER-250; SER-259; SER-283; SER-287 AND SER-299</scope>
    <scope>IDENTIFICATION BY MASS SPECTROMETRY [LARGE SCALE ANALYSIS]</scope>
    <source>
        <tissue>Kidney</tissue>
        <tissue>Pancreas</tissue>
    </source>
</reference>
<gene>
    <name type="primary">Nr3c2</name>
    <name type="synonym">Mlr</name>
</gene>
<protein>
    <recommendedName>
        <fullName>Mineralocorticoid receptor</fullName>
        <shortName>MR</shortName>
    </recommendedName>
    <alternativeName>
        <fullName>Nuclear receptor subfamily 3 group C member 2</fullName>
    </alternativeName>
</protein>
<name>MCR_MOUSE</name>
<feature type="chain" id="PRO_0000053683" description="Mineralocorticoid receptor">
    <location>
        <begin position="1"/>
        <end position="978"/>
    </location>
</feature>
<feature type="domain" description="NR LBD" evidence="4">
    <location>
        <begin position="720"/>
        <end position="958"/>
    </location>
</feature>
<feature type="DNA-binding region" description="Nuclear receptor" evidence="3">
    <location>
        <begin position="603"/>
        <end position="666"/>
    </location>
</feature>
<feature type="zinc finger region" description="NR C4-type" evidence="3">
    <location>
        <begin position="603"/>
        <end position="623"/>
    </location>
</feature>
<feature type="zinc finger region" description="NR C4-type" evidence="3">
    <location>
        <begin position="637"/>
        <end position="661"/>
    </location>
</feature>
<feature type="region of interest" description="Modulating">
    <location>
        <begin position="1"/>
        <end position="602"/>
    </location>
</feature>
<feature type="region of interest" description="Disordered" evidence="5">
    <location>
        <begin position="234"/>
        <end position="331"/>
    </location>
</feature>
<feature type="region of interest" description="Disordered" evidence="5">
    <location>
        <begin position="353"/>
        <end position="372"/>
    </location>
</feature>
<feature type="region of interest" description="Hinge">
    <location>
        <begin position="667"/>
        <end position="719"/>
    </location>
</feature>
<feature type="region of interest" description="Disordered" evidence="5">
    <location>
        <begin position="681"/>
        <end position="706"/>
    </location>
</feature>
<feature type="region of interest" description="Important for coactivator binding" evidence="1">
    <location>
        <begin position="776"/>
        <end position="779"/>
    </location>
</feature>
<feature type="compositionally biased region" description="Polar residues" evidence="5">
    <location>
        <begin position="234"/>
        <end position="243"/>
    </location>
</feature>
<feature type="compositionally biased region" description="Low complexity" evidence="5">
    <location>
        <begin position="259"/>
        <end position="300"/>
    </location>
</feature>
<feature type="compositionally biased region" description="Polar residues" evidence="5">
    <location>
        <begin position="301"/>
        <end position="331"/>
    </location>
</feature>
<feature type="compositionally biased region" description="Pro residues" evidence="5">
    <location>
        <begin position="688"/>
        <end position="697"/>
    </location>
</feature>
<feature type="binding site" evidence="2">
    <location>
        <position position="603"/>
    </location>
    <ligand>
        <name>Zn(2+)</name>
        <dbReference type="ChEBI" id="CHEBI:29105"/>
        <label>1</label>
    </ligand>
</feature>
<feature type="binding site" evidence="2">
    <location>
        <position position="606"/>
    </location>
    <ligand>
        <name>Zn(2+)</name>
        <dbReference type="ChEBI" id="CHEBI:29105"/>
        <label>1</label>
    </ligand>
</feature>
<feature type="binding site" evidence="2">
    <location>
        <position position="620"/>
    </location>
    <ligand>
        <name>Zn(2+)</name>
        <dbReference type="ChEBI" id="CHEBI:29105"/>
        <label>1</label>
    </ligand>
</feature>
<feature type="binding site" evidence="2">
    <location>
        <position position="623"/>
    </location>
    <ligand>
        <name>Zn(2+)</name>
        <dbReference type="ChEBI" id="CHEBI:29105"/>
        <label>1</label>
    </ligand>
</feature>
<feature type="binding site" evidence="2">
    <location>
        <position position="637"/>
    </location>
    <ligand>
        <name>Zn(2+)</name>
        <dbReference type="ChEBI" id="CHEBI:29105"/>
        <label>2</label>
    </ligand>
</feature>
<feature type="binding site" evidence="2">
    <location>
        <position position="643"/>
    </location>
    <ligand>
        <name>Zn(2+)</name>
        <dbReference type="ChEBI" id="CHEBI:29105"/>
        <label>2</label>
    </ligand>
</feature>
<feature type="binding site" evidence="2">
    <location>
        <position position="653"/>
    </location>
    <ligand>
        <name>Zn(2+)</name>
        <dbReference type="ChEBI" id="CHEBI:29105"/>
        <label>2</label>
    </ligand>
</feature>
<feature type="binding site" evidence="2">
    <location>
        <position position="656"/>
    </location>
    <ligand>
        <name>Zn(2+)</name>
        <dbReference type="ChEBI" id="CHEBI:29105"/>
        <label>2</label>
    </ligand>
</feature>
<feature type="binding site" evidence="2">
    <location>
        <position position="764"/>
    </location>
    <ligand>
        <name>21-hydroxyprogesterone</name>
        <dbReference type="ChEBI" id="CHEBI:16973"/>
    </ligand>
</feature>
<feature type="binding site" evidence="2">
    <location>
        <position position="764"/>
    </location>
    <ligand>
        <name>aldosterone</name>
        <dbReference type="ChEBI" id="CHEBI:27584"/>
    </ligand>
</feature>
<feature type="binding site" evidence="2">
    <location>
        <position position="764"/>
    </location>
    <ligand>
        <name>progesterone</name>
        <dbReference type="ChEBI" id="CHEBI:17026"/>
    </ligand>
</feature>
<feature type="binding site" evidence="2">
    <location>
        <position position="770"/>
    </location>
    <ligand>
        <name>21-hydroxyprogesterone</name>
        <dbReference type="ChEBI" id="CHEBI:16973"/>
    </ligand>
</feature>
<feature type="binding site" evidence="2">
    <location>
        <position position="770"/>
    </location>
    <ligand>
        <name>aldosterone</name>
        <dbReference type="ChEBI" id="CHEBI:27584"/>
    </ligand>
</feature>
<feature type="binding site" evidence="2">
    <location>
        <position position="770"/>
    </location>
    <ligand>
        <name>progesterone</name>
        <dbReference type="ChEBI" id="CHEBI:17026"/>
    </ligand>
</feature>
<feature type="binding site" evidence="2">
    <location>
        <position position="811"/>
    </location>
    <ligand>
        <name>21-hydroxyprogesterone</name>
        <dbReference type="ChEBI" id="CHEBI:16973"/>
    </ligand>
</feature>
<feature type="binding site" evidence="2">
    <location>
        <position position="811"/>
    </location>
    <ligand>
        <name>aldosterone</name>
        <dbReference type="ChEBI" id="CHEBI:27584"/>
    </ligand>
</feature>
<feature type="binding site" evidence="2">
    <location>
        <position position="811"/>
    </location>
    <ligand>
        <name>progesterone</name>
        <dbReference type="ChEBI" id="CHEBI:17026"/>
    </ligand>
</feature>
<feature type="binding site" evidence="2">
    <location>
        <position position="939"/>
    </location>
    <ligand>
        <name>21-hydroxyprogesterone</name>
        <dbReference type="ChEBI" id="CHEBI:16973"/>
    </ligand>
</feature>
<feature type="binding site" evidence="2">
    <location>
        <position position="939"/>
    </location>
    <ligand>
        <name>aldosterone</name>
        <dbReference type="ChEBI" id="CHEBI:27584"/>
    </ligand>
</feature>
<feature type="binding site" evidence="2">
    <location>
        <position position="939"/>
    </location>
    <ligand>
        <name>progesterone</name>
        <dbReference type="ChEBI" id="CHEBI:17026"/>
    </ligand>
</feature>
<feature type="modified residue" description="Phosphoserine" evidence="9">
    <location>
        <position position="250"/>
    </location>
</feature>
<feature type="modified residue" description="Phosphoserine" evidence="9">
    <location>
        <position position="259"/>
    </location>
</feature>
<feature type="modified residue" description="Phosphoserine" evidence="9">
    <location>
        <position position="283"/>
    </location>
</feature>
<feature type="modified residue" description="Phosphoserine" evidence="9">
    <location>
        <position position="287"/>
    </location>
</feature>
<feature type="modified residue" description="Phosphoserine" evidence="8 9">
    <location>
        <position position="299"/>
    </location>
</feature>
<feature type="sequence conflict" description="In Ref. 2; CAC86374." evidence="7" ref="2">
    <original>E</original>
    <variation>Q</variation>
    <location>
        <position position="103"/>
    </location>
</feature>
<feature type="sequence conflict" description="In Ref. 2; CAC86374." evidence="7" ref="2">
    <original>G</original>
    <variation>D</variation>
    <location>
        <position position="106"/>
    </location>
</feature>
<keyword id="KW-0963">Cytoplasm</keyword>
<keyword id="KW-0238">DNA-binding</keyword>
<keyword id="KW-0256">Endoplasmic reticulum</keyword>
<keyword id="KW-0446">Lipid-binding</keyword>
<keyword id="KW-0472">Membrane</keyword>
<keyword id="KW-0479">Metal-binding</keyword>
<keyword id="KW-0539">Nucleus</keyword>
<keyword id="KW-0597">Phosphoprotein</keyword>
<keyword id="KW-0675">Receptor</keyword>
<keyword id="KW-1185">Reference proteome</keyword>
<keyword id="KW-0754">Steroid-binding</keyword>
<keyword id="KW-0804">Transcription</keyword>
<keyword id="KW-0805">Transcription regulation</keyword>
<keyword id="KW-0862">Zinc</keyword>
<keyword id="KW-0863">Zinc-finger</keyword>
<proteinExistence type="evidence at protein level"/>
<accession>Q8VII8</accession>
<accession>Q8VII9</accession>
<sequence>METKGYHSLPEGLDMERRWSQVSQTLERSSLGPAERTNENSYMEIVNVSCVSGATPNNSTQGSSKEKHELLPCLQQDNSRSGILPSDIKTELESKELSATVAESMGLYMDSVRDAEYTYDQQNQQGSLSPAKIYQNMEQLVKFYKENGHRSSTLSAISRPLRSFMPDSGTSMNGGALRAIVKSPIICHEKSPSVCSPLNMPSSVCSPAGINSMSSSTASFGSFPVHSPITQGTSLTCSPSVENRGSRSHSPVHASNVGSPLSSPLSSMKSPISSPPSHCSVKSPVSSPNNVPLRSSVSSPANLNNSRCSVSSPSNTNNRSTLSSPTASTVGSIGSPISNAFSYTTSGASAGAGAIQDMVPSPDTHEKGAHDVPFPKTEEVEKAISNGVTGQLNIVQYIKPEPDGAFSSSCLGGNNKINPSSPFSVPIKQESSKHSCSGASFKGNPTVNPFPFMDGSYFSFMDDKDYYSLSGILGPPVPGFDSSCEGSAFPGGIKQEPDDGSYFPETSIPSSAIIGVNSGGQSFHYRIGAQGTISLSRSPRDQSFQHLSSFPPVNALVESWKPHGDLSSRRSDGYPVLEYIPENVSSSTLRSVSTGSSRPSKICLVCGDEASGCHYGVVTCGSCKVFFKRAVEHNYLCAGRNDCIIDKIRRKNCPACRLQKCLQAGMNLGARKSKKLGKLKGLHEEQPQQPPPPPPQSPEEGTTYIAPTKEPSVNSALVPQLASITRALTPSPSMILENIEPEIVYAGYDNSKPDTAESLLSTLNRLAGKQMIQVVKWAKVLPGFKNLPLEDQITLIQYSWMCLSSFALSWRSYKHTNSQFLYFAPDLVFNEEKMHQSAMYELCQGMRQISLQFVRLQLTFEEYSIMKVLLLLSTVPKDGLKSQAAFEEMRTNYIKELRKMVTKCPNSSGQSWQRFYQLTKLLDSMHDLVNDLLEFCFYTFRESQALKVEFPAMLVEIISDQLPKVESGNAKPLYFHRK</sequence>
<organism>
    <name type="scientific">Mus musculus</name>
    <name type="common">Mouse</name>
    <dbReference type="NCBI Taxonomy" id="10090"/>
    <lineage>
        <taxon>Eukaryota</taxon>
        <taxon>Metazoa</taxon>
        <taxon>Chordata</taxon>
        <taxon>Craniata</taxon>
        <taxon>Vertebrata</taxon>
        <taxon>Euteleostomi</taxon>
        <taxon>Mammalia</taxon>
        <taxon>Eutheria</taxon>
        <taxon>Euarchontoglires</taxon>
        <taxon>Glires</taxon>
        <taxon>Rodentia</taxon>
        <taxon>Myomorpha</taxon>
        <taxon>Muroidea</taxon>
        <taxon>Muridae</taxon>
        <taxon>Murinae</taxon>
        <taxon>Mus</taxon>
        <taxon>Mus</taxon>
    </lineage>
</organism>
<dbReference type="EMBL" id="AC113941">
    <property type="status" value="NOT_ANNOTATED_CDS"/>
    <property type="molecule type" value="Genomic_DNA"/>
</dbReference>
<dbReference type="EMBL" id="AC116768">
    <property type="status" value="NOT_ANNOTATED_CDS"/>
    <property type="molecule type" value="Genomic_DNA"/>
</dbReference>
<dbReference type="EMBL" id="AC118019">
    <property type="status" value="NOT_ANNOTATED_CDS"/>
    <property type="molecule type" value="Genomic_DNA"/>
</dbReference>
<dbReference type="EMBL" id="AC119248">
    <property type="status" value="NOT_ANNOTATED_CDS"/>
    <property type="molecule type" value="Genomic_DNA"/>
</dbReference>
<dbReference type="EMBL" id="AJ311855">
    <property type="protein sequence ID" value="CAC86374.1"/>
    <property type="molecule type" value="mRNA"/>
</dbReference>
<dbReference type="EMBL" id="AJ311856">
    <property type="protein sequence ID" value="CAC86375.1"/>
    <property type="molecule type" value="mRNA"/>
</dbReference>
<dbReference type="SMR" id="Q8VII8"/>
<dbReference type="CORUM" id="Q8VII8"/>
<dbReference type="FunCoup" id="Q8VII8">
    <property type="interactions" value="205"/>
</dbReference>
<dbReference type="STRING" id="10090.ENSMUSP00000105539"/>
<dbReference type="iPTMnet" id="Q8VII8"/>
<dbReference type="PhosphoSitePlus" id="Q8VII8"/>
<dbReference type="PaxDb" id="10090-ENSMUSP00000105538"/>
<dbReference type="ProteomicsDB" id="295717"/>
<dbReference type="AGR" id="MGI:99459"/>
<dbReference type="MGI" id="MGI:99459">
    <property type="gene designation" value="Nr3c2"/>
</dbReference>
<dbReference type="eggNOG" id="KOG3575">
    <property type="taxonomic scope" value="Eukaryota"/>
</dbReference>
<dbReference type="InParanoid" id="Q8VII8"/>
<dbReference type="Reactome" id="R-MMU-3371497">
    <property type="pathway name" value="HSP90 chaperone cycle for steroid hormone receptors (SHR) in the presence of ligand"/>
</dbReference>
<dbReference type="Reactome" id="R-MMU-383280">
    <property type="pathway name" value="Nuclear Receptor transcription pathway"/>
</dbReference>
<dbReference type="Reactome" id="R-MMU-4090294">
    <property type="pathway name" value="SUMOylation of intracellular receptors"/>
</dbReference>
<dbReference type="ChiTaRS" id="Nr3c2">
    <property type="organism name" value="mouse"/>
</dbReference>
<dbReference type="PRO" id="PR:Q8VII8"/>
<dbReference type="Proteomes" id="UP000000589">
    <property type="component" value="Unplaced"/>
</dbReference>
<dbReference type="RNAct" id="Q8VII8">
    <property type="molecule type" value="protein"/>
</dbReference>
<dbReference type="GO" id="GO:0005789">
    <property type="term" value="C:endoplasmic reticulum membrane"/>
    <property type="evidence" value="ECO:0007669"/>
    <property type="project" value="UniProtKB-SubCell"/>
</dbReference>
<dbReference type="GO" id="GO:0098982">
    <property type="term" value="C:GABA-ergic synapse"/>
    <property type="evidence" value="ECO:0000314"/>
    <property type="project" value="SynGO"/>
</dbReference>
<dbReference type="GO" id="GO:0098978">
    <property type="term" value="C:glutamatergic synapse"/>
    <property type="evidence" value="ECO:0000314"/>
    <property type="project" value="SynGO"/>
</dbReference>
<dbReference type="GO" id="GO:0005634">
    <property type="term" value="C:nucleus"/>
    <property type="evidence" value="ECO:0007669"/>
    <property type="project" value="UniProtKB-SubCell"/>
</dbReference>
<dbReference type="GO" id="GO:0098793">
    <property type="term" value="C:presynapse"/>
    <property type="evidence" value="ECO:0007669"/>
    <property type="project" value="GOC"/>
</dbReference>
<dbReference type="GO" id="GO:0043235">
    <property type="term" value="C:receptor complex"/>
    <property type="evidence" value="ECO:0000266"/>
    <property type="project" value="MGI"/>
</dbReference>
<dbReference type="GO" id="GO:0003700">
    <property type="term" value="F:DNA-binding transcription factor activity"/>
    <property type="evidence" value="ECO:0007669"/>
    <property type="project" value="InterPro"/>
</dbReference>
<dbReference type="GO" id="GO:0043565">
    <property type="term" value="F:sequence-specific DNA binding"/>
    <property type="evidence" value="ECO:0007669"/>
    <property type="project" value="InterPro"/>
</dbReference>
<dbReference type="GO" id="GO:0005496">
    <property type="term" value="F:steroid binding"/>
    <property type="evidence" value="ECO:0000314"/>
    <property type="project" value="MGI"/>
</dbReference>
<dbReference type="GO" id="GO:0008270">
    <property type="term" value="F:zinc ion binding"/>
    <property type="evidence" value="ECO:0007669"/>
    <property type="project" value="UniProtKB-KW"/>
</dbReference>
<dbReference type="GO" id="GO:0038166">
    <property type="term" value="P:angiotensin-activated signaling pathway"/>
    <property type="evidence" value="ECO:0000315"/>
    <property type="project" value="MGI"/>
</dbReference>
<dbReference type="GO" id="GO:0006883">
    <property type="term" value="P:intracellular sodium ion homeostasis"/>
    <property type="evidence" value="ECO:0000315"/>
    <property type="project" value="MGI"/>
</dbReference>
<dbReference type="GO" id="GO:0055075">
    <property type="term" value="P:potassium ion homeostasis"/>
    <property type="evidence" value="ECO:0000315"/>
    <property type="project" value="MGI"/>
</dbReference>
<dbReference type="GO" id="GO:0099171">
    <property type="term" value="P:presynaptic modulation of chemical synaptic transmission"/>
    <property type="evidence" value="ECO:0000314"/>
    <property type="project" value="SynGO"/>
</dbReference>
<dbReference type="GO" id="GO:0002017">
    <property type="term" value="P:regulation of blood volume by renal aldosterone"/>
    <property type="evidence" value="ECO:0000315"/>
    <property type="project" value="MGI"/>
</dbReference>
<dbReference type="GO" id="GO:0060078">
    <property type="term" value="P:regulation of postsynaptic membrane potential"/>
    <property type="evidence" value="ECO:0000314"/>
    <property type="project" value="SynGO"/>
</dbReference>
<dbReference type="GO" id="GO:0035812">
    <property type="term" value="P:renal sodium excretion"/>
    <property type="evidence" value="ECO:0000315"/>
    <property type="project" value="MGI"/>
</dbReference>
<dbReference type="GO" id="GO:0007165">
    <property type="term" value="P:signal transduction"/>
    <property type="evidence" value="ECO:0000315"/>
    <property type="project" value="MGI"/>
</dbReference>
<dbReference type="CDD" id="cd07172">
    <property type="entry name" value="NR_DBD_GR_PR"/>
    <property type="match status" value="1"/>
</dbReference>
<dbReference type="CDD" id="cd07075">
    <property type="entry name" value="NR_LBD_MR"/>
    <property type="match status" value="1"/>
</dbReference>
<dbReference type="FunFam" id="1.10.565.10:FF:000004">
    <property type="entry name" value="Androgen receptor variant"/>
    <property type="match status" value="1"/>
</dbReference>
<dbReference type="FunFam" id="3.30.50.10:FF:000029">
    <property type="entry name" value="mineralocorticoid receptor isoform X1"/>
    <property type="match status" value="1"/>
</dbReference>
<dbReference type="Gene3D" id="3.30.50.10">
    <property type="entry name" value="Erythroid Transcription Factor GATA-1, subunit A"/>
    <property type="match status" value="1"/>
</dbReference>
<dbReference type="Gene3D" id="1.10.565.10">
    <property type="entry name" value="Retinoid X Receptor"/>
    <property type="match status" value="1"/>
</dbReference>
<dbReference type="InterPro" id="IPR035500">
    <property type="entry name" value="NHR-like_dom_sf"/>
</dbReference>
<dbReference type="InterPro" id="IPR000536">
    <property type="entry name" value="Nucl_hrmn_rcpt_lig-bd"/>
</dbReference>
<dbReference type="InterPro" id="IPR050200">
    <property type="entry name" value="Nuclear_hormone_rcpt_NR3"/>
</dbReference>
<dbReference type="InterPro" id="IPR001628">
    <property type="entry name" value="Znf_hrmn_rcpt"/>
</dbReference>
<dbReference type="InterPro" id="IPR013088">
    <property type="entry name" value="Znf_NHR/GATA"/>
</dbReference>
<dbReference type="PANTHER" id="PTHR48092">
    <property type="entry name" value="KNIRPS-RELATED PROTEIN-RELATED"/>
    <property type="match status" value="1"/>
</dbReference>
<dbReference type="Pfam" id="PF00104">
    <property type="entry name" value="Hormone_recep"/>
    <property type="match status" value="1"/>
</dbReference>
<dbReference type="Pfam" id="PF00105">
    <property type="entry name" value="zf-C4"/>
    <property type="match status" value="1"/>
</dbReference>
<dbReference type="PRINTS" id="PR00047">
    <property type="entry name" value="STROIDFINGER"/>
</dbReference>
<dbReference type="SMART" id="SM00430">
    <property type="entry name" value="HOLI"/>
    <property type="match status" value="1"/>
</dbReference>
<dbReference type="SMART" id="SM00399">
    <property type="entry name" value="ZnF_C4"/>
    <property type="match status" value="1"/>
</dbReference>
<dbReference type="SUPFAM" id="SSF57716">
    <property type="entry name" value="Glucocorticoid receptor-like (DNA-binding domain)"/>
    <property type="match status" value="1"/>
</dbReference>
<dbReference type="SUPFAM" id="SSF48508">
    <property type="entry name" value="Nuclear receptor ligand-binding domain"/>
    <property type="match status" value="1"/>
</dbReference>
<dbReference type="PROSITE" id="PS51843">
    <property type="entry name" value="NR_LBD"/>
    <property type="match status" value="1"/>
</dbReference>
<dbReference type="PROSITE" id="PS00031">
    <property type="entry name" value="NUCLEAR_REC_DBD_1"/>
    <property type="match status" value="1"/>
</dbReference>
<dbReference type="PROSITE" id="PS51030">
    <property type="entry name" value="NUCLEAR_REC_DBD_2"/>
    <property type="match status" value="1"/>
</dbReference>
<comment type="function">
    <text evidence="6">Receptor for both mineralocorticoids (MC) such as aldosterone and glucocorticoids (GC) such as corticosterone or cortisol. Binds to mineralocorticoid response elements (MRE) and transactivates target genes. The effect of MC is to increase ion and water transport and thus raise extracellular fluid volume and blood pressure and lower potassium levels.</text>
</comment>
<comment type="subunit">
    <text evidence="1">Heteromultimeric cytoplasmic complex with HSP90, HSP70, and FKBP4, in the absence of ligand. After ligand binding, it translocates to the nucleus and binds to DNA as a homodimer and as a heterodimer with NR3C1. Binds the coactivator NCOA2. May interact with HSD11B2 in the absence of ligand. Binds the coactivators NCOA1, TIF1 and NRIP1 (By similarity).</text>
</comment>
<comment type="subcellular location">
    <subcellularLocation>
        <location evidence="1">Cytoplasm</location>
    </subcellularLocation>
    <subcellularLocation>
        <location evidence="3 6">Nucleus</location>
    </subcellularLocation>
    <subcellularLocation>
        <location evidence="1">Endoplasmic reticulum membrane</location>
        <topology evidence="1">Peripheral membrane protein</topology>
    </subcellularLocation>
    <text evidence="1">Cytoplasmic and nuclear in the absence of ligand; nuclear after ligand-binding. When bound to HSD11B2, it is found associated with the endoplasmic reticulum membrane (By similarity).</text>
</comment>
<comment type="tissue specificity">
    <text evidence="6">Expressed in heart and kidney.</text>
</comment>
<comment type="domain">
    <text>Composed of three domains: a modulating N-terminal domain, a DNA-binding domain and a C-terminal ligand-binding domain.</text>
</comment>
<comment type="PTM">
    <text evidence="1">Phosphorylated.</text>
</comment>
<comment type="similarity">
    <text evidence="7">Belongs to the nuclear hormone receptor family. NR3 subfamily.</text>
</comment>
<evidence type="ECO:0000250" key="1"/>
<evidence type="ECO:0000250" key="2">
    <source>
        <dbReference type="UniProtKB" id="P08235"/>
    </source>
</evidence>
<evidence type="ECO:0000255" key="3">
    <source>
        <dbReference type="PROSITE-ProRule" id="PRU00407"/>
    </source>
</evidence>
<evidence type="ECO:0000255" key="4">
    <source>
        <dbReference type="PROSITE-ProRule" id="PRU01189"/>
    </source>
</evidence>
<evidence type="ECO:0000256" key="5">
    <source>
        <dbReference type="SAM" id="MobiDB-lite"/>
    </source>
</evidence>
<evidence type="ECO:0000269" key="6">
    <source>
    </source>
</evidence>
<evidence type="ECO:0000305" key="7"/>
<evidence type="ECO:0007744" key="8">
    <source>
    </source>
</evidence>
<evidence type="ECO:0007744" key="9">
    <source>
    </source>
</evidence>